<name>ODFP2_MACFA</name>
<keyword id="KW-0025">Alternative splicing</keyword>
<keyword id="KW-0966">Cell projection</keyword>
<keyword id="KW-0969">Cilium</keyword>
<keyword id="KW-0175">Coiled coil</keyword>
<keyword id="KW-0963">Cytoplasm</keyword>
<keyword id="KW-0206">Cytoskeleton</keyword>
<keyword id="KW-0217">Developmental protein</keyword>
<keyword id="KW-0221">Differentiation</keyword>
<keyword id="KW-0282">Flagellum</keyword>
<keyword id="KW-1017">Isopeptide bond</keyword>
<keyword id="KW-0493">Microtubule</keyword>
<keyword id="KW-0597">Phosphoprotein</keyword>
<keyword id="KW-1185">Reference proteome</keyword>
<keyword id="KW-0744">Spermatogenesis</keyword>
<keyword id="KW-0832">Ubl conjugation</keyword>
<evidence type="ECO:0000250" key="1">
    <source>
        <dbReference type="UniProtKB" id="A3KGV1"/>
    </source>
</evidence>
<evidence type="ECO:0000250" key="2">
    <source>
        <dbReference type="UniProtKB" id="Q2MJU7"/>
    </source>
</evidence>
<evidence type="ECO:0000250" key="3">
    <source>
        <dbReference type="UniProtKB" id="Q5BJF6"/>
    </source>
</evidence>
<evidence type="ECO:0000250" key="4">
    <source>
        <dbReference type="UniProtKB" id="Q6AYX5"/>
    </source>
</evidence>
<evidence type="ECO:0000255" key="5"/>
<evidence type="ECO:0000256" key="6">
    <source>
        <dbReference type="SAM" id="MobiDB-lite"/>
    </source>
</evidence>
<evidence type="ECO:0000303" key="7">
    <source ref="1"/>
</evidence>
<evidence type="ECO:0000305" key="8"/>
<sequence>MSASSSGGSPRFPSCGKNGVTSLTQKKVLRAPCGAPSVTVTKSHKRGMKGDTVNVRRSVRVKTKNPPRCLEITPPSSEKLVSVMRLSDLSTEDDDSGHCKMNRYDKKIDSLMNAVGCLKSEVKMQKGERQMAKRFLEERKEELEEVAHELAETEHENTVLRHNIERMKEEKDYTILQKKHLQQEKECLMSKLVEAEMDGAAAAKQVMALKDTIGKLKTEKQMTCTDINTLARQKELLLQKLSTFEETNRTLRDLLREQHCKEDSERLMEQQGALLKRLAEADSEKARLLLLLQDKDKEVEELLQEIQCEKAQAKTASELSKSMESMRGHLQAQLRSKEAENSRLCMQIKNLERSGNQHKAEVEAIMEQLKELKQKGDRDKESLKKAIRAQKERAEKSEEYAEQLHVQLADKDLYVAEALSTLESWRSRYNQVVKDKGDLELEIIVLNDRVTDLVNQQQTLEEKMREDRDSLVERLHRQTAEYSAFKLENERLKASFAPMEDKLNQAHLEVQQLKASVKNYEGMIDNYKSQVMKTRLEADEVAAQLERCDKENKILKDEMNKEIEAARRQFQSQLADLQQLPDILKITEAKLAECQDQLQGYERKNIDLTAIISDLRSRVRDWQKGSHELTRAGARIPR</sequence>
<feature type="chain" id="PRO_0000299457" description="Outer dense fiber protein 2">
    <location>
        <begin position="1"/>
        <end position="638"/>
    </location>
</feature>
<feature type="region of interest" description="Disordered" evidence="6">
    <location>
        <begin position="373"/>
        <end position="396"/>
    </location>
</feature>
<feature type="coiled-coil region" evidence="5">
    <location>
        <begin position="125"/>
        <end position="198"/>
    </location>
</feature>
<feature type="coiled-coil region" evidence="5">
    <location>
        <begin position="226"/>
        <end position="404"/>
    </location>
</feature>
<feature type="coiled-coil region" evidence="5">
    <location>
        <begin position="442"/>
        <end position="616"/>
    </location>
</feature>
<feature type="modified residue" description="Phosphothreonine" evidence="4">
    <location>
        <position position="73"/>
    </location>
</feature>
<feature type="modified residue" description="Phosphoserine; by TSSK4" evidence="1">
    <location>
        <position position="76"/>
    </location>
</feature>
<feature type="modified residue" description="Phosphoserine" evidence="4">
    <location>
        <position position="87"/>
    </location>
</feature>
<feature type="modified residue" description="Phosphoserine" evidence="4">
    <location>
        <position position="90"/>
    </location>
</feature>
<feature type="modified residue" description="Phosphothreonine" evidence="4">
    <location>
        <position position="91"/>
    </location>
</feature>
<feature type="modified residue" description="Phosphoserine" evidence="4">
    <location>
        <position position="96"/>
    </location>
</feature>
<feature type="modified residue" description="Phosphoserine" evidence="4">
    <location>
        <position position="110"/>
    </location>
</feature>
<feature type="modified residue" description="Phosphoserine" evidence="4">
    <location>
        <position position="120"/>
    </location>
</feature>
<feature type="modified residue" description="Phosphothreonine" evidence="3">
    <location>
        <position position="212"/>
    </location>
</feature>
<feature type="modified residue" description="Phosphoserine" evidence="4">
    <location>
        <position position="242"/>
    </location>
</feature>
<feature type="modified residue" description="Phosphoserine" evidence="4">
    <location>
        <position position="613"/>
    </location>
</feature>
<feature type="cross-link" description="Glycyl lysine isopeptide (Lys-Gly) (interchain with G-Cter in SUMO2)" evidence="3">
    <location>
        <position position="119"/>
    </location>
</feature>
<feature type="splice variant" id="VSP_027670" description="In isoform 2." evidence="7">
    <original>MSASSSGGSPRFPSCGKNGVTSLTQKKVLRAPCGAPSVTVTKSHKRGMKGDTVNVRRSVRVKTKNPPR</original>
    <variation>MPPGKSSARPVGCKWENPPH</variation>
    <location>
        <begin position="1"/>
        <end position="68"/>
    </location>
</feature>
<feature type="sequence conflict" description="In Ref. 1; BAE00711." evidence="8" ref="1">
    <original>A</original>
    <variation>T</variation>
    <location>
        <position position="231"/>
    </location>
</feature>
<comment type="function">
    <text evidence="3">Seems to be a major component of sperm tail outer dense fibers (ODF). ODFs are filamentous structures located on the outside of the axoneme in the midpiece and principal piece of the mammalian sperm tail and may help to maintain the passive elastic structures and elastic recoil of the sperm tail. May have a modulating influence on sperm motility. Functions as a general scaffold protein that is specifically localized at the distal/subdistal appendages of mother centrioles. Component of the centrosome matrix required for the localization of PLK1 and NIN to the centrosomes. Required for the formation and/or maintenance of normal CETN1 assembly (By similarity).</text>
</comment>
<comment type="subunit">
    <text evidence="1 3">Self-associates. Associates with microtubules and forms a fibrillar structure partially linked to the microtubule network. Interacts via its C-terminus with PLK1. Interacts with ODF1. Localized at the distal/subdistal appendages of mother centrioles. Interacts with MARK4; the interaction is required for localization of ODF2 to centrioles. Interacts with TSSK4. Interacts with AKNA. Interacts with QRICH2 (By similarity). Interacts with CFAP58 (By similarity). Interacts with BBOF1 (By similarity). Interacts with CCDC38 (By similarity). Interacts with CCDC42 (By similarity).</text>
</comment>
<comment type="subcellular location">
    <subcellularLocation>
        <location evidence="1">Cytoplasm</location>
        <location evidence="1">Cytoskeleton</location>
        <location evidence="1">Microtubule organizing center</location>
        <location evidence="1">Centrosome</location>
    </subcellularLocation>
    <subcellularLocation>
        <location evidence="1">Cell projection</location>
        <location evidence="1">Cilium</location>
    </subcellularLocation>
    <subcellularLocation>
        <location evidence="1">Cytoplasm</location>
        <location evidence="1">Cytoskeleton</location>
        <location evidence="1">Microtubule organizing center</location>
        <location evidence="1">Centrosome</location>
        <location evidence="1">Centriole</location>
    </subcellularLocation>
    <subcellularLocation>
        <location evidence="1">Cytoplasm</location>
        <location evidence="1">Cytoskeleton</location>
        <location evidence="1">Spindle pole</location>
    </subcellularLocation>
    <subcellularLocation>
        <location evidence="1">Cell projection</location>
        <location evidence="1">Cilium</location>
        <location evidence="1">Flagellum</location>
    </subcellularLocation>
    <text evidence="1">Localized at the microtubule organizing centers in interphase and spindle poles in mitosis. Localized at the distal/subdistal appendages of mother centrioles.</text>
</comment>
<comment type="alternative products">
    <event type="alternative splicing"/>
    <isoform>
        <id>Q4R8C3-1</id>
        <name>1</name>
        <sequence type="displayed"/>
    </isoform>
    <isoform>
        <id>Q4R8C3-2</id>
        <name>2</name>
        <sequence type="described" ref="VSP_027670"/>
    </isoform>
</comment>
<comment type="PTM">
    <text evidence="1 2">Tyrosine phosphorylated. Phosphorylated on Ser-76 by TSSK4.</text>
</comment>
<comment type="similarity">
    <text evidence="8">Belongs to the ODF2 family.</text>
</comment>
<reference key="1">
    <citation type="submission" date="2005-06" db="EMBL/GenBank/DDBJ databases">
        <title>DNA sequences of macaque genes expressed in brain or testis and its evolutionary implications.</title>
        <authorList>
            <consortium name="International consortium for macaque cDNA sequencing and analysis"/>
        </authorList>
    </citation>
    <scope>NUCLEOTIDE SEQUENCE [LARGE SCALE MRNA] (ISOFORMS 1 AND 2)</scope>
    <source>
        <tissue>Testis</tissue>
    </source>
</reference>
<accession>Q4R8C3</accession>
<accession>Q4R861</accession>
<protein>
    <recommendedName>
        <fullName>Outer dense fiber protein 2</fullName>
    </recommendedName>
    <alternativeName>
        <fullName>Cenexin</fullName>
    </alternativeName>
    <alternativeName>
        <fullName>Outer dense fiber of sperm tails protein 2</fullName>
    </alternativeName>
</protein>
<dbReference type="EMBL" id="AB168532">
    <property type="protein sequence ID" value="BAE00649.1"/>
    <property type="molecule type" value="mRNA"/>
</dbReference>
<dbReference type="EMBL" id="AB168597">
    <property type="protein sequence ID" value="BAE00711.1"/>
    <property type="molecule type" value="mRNA"/>
</dbReference>
<dbReference type="SMR" id="Q4R8C3"/>
<dbReference type="STRING" id="9541.ENSMFAP00000003775"/>
<dbReference type="eggNOG" id="ENOG502QUXQ">
    <property type="taxonomic scope" value="Eukaryota"/>
</dbReference>
<dbReference type="Proteomes" id="UP000233100">
    <property type="component" value="Unplaced"/>
</dbReference>
<dbReference type="GO" id="GO:0005814">
    <property type="term" value="C:centriole"/>
    <property type="evidence" value="ECO:0007669"/>
    <property type="project" value="UniProtKB-SubCell"/>
</dbReference>
<dbReference type="GO" id="GO:0005813">
    <property type="term" value="C:centrosome"/>
    <property type="evidence" value="ECO:0000250"/>
    <property type="project" value="UniProtKB"/>
</dbReference>
<dbReference type="GO" id="GO:0005737">
    <property type="term" value="C:cytoplasm"/>
    <property type="evidence" value="ECO:0007669"/>
    <property type="project" value="UniProtKB-KW"/>
</dbReference>
<dbReference type="GO" id="GO:0005874">
    <property type="term" value="C:microtubule"/>
    <property type="evidence" value="ECO:0007669"/>
    <property type="project" value="UniProtKB-KW"/>
</dbReference>
<dbReference type="GO" id="GO:0036126">
    <property type="term" value="C:sperm flagellum"/>
    <property type="evidence" value="ECO:0000250"/>
    <property type="project" value="UniProtKB"/>
</dbReference>
<dbReference type="GO" id="GO:0097225">
    <property type="term" value="C:sperm midpiece"/>
    <property type="evidence" value="ECO:0000250"/>
    <property type="project" value="UniProtKB"/>
</dbReference>
<dbReference type="GO" id="GO:0097228">
    <property type="term" value="C:sperm principal piece"/>
    <property type="evidence" value="ECO:0000250"/>
    <property type="project" value="UniProtKB"/>
</dbReference>
<dbReference type="GO" id="GO:0000922">
    <property type="term" value="C:spindle pole"/>
    <property type="evidence" value="ECO:0007669"/>
    <property type="project" value="UniProtKB-SubCell"/>
</dbReference>
<dbReference type="GO" id="GO:0030154">
    <property type="term" value="P:cell differentiation"/>
    <property type="evidence" value="ECO:0007669"/>
    <property type="project" value="UniProtKB-KW"/>
</dbReference>
<dbReference type="GO" id="GO:1902017">
    <property type="term" value="P:regulation of cilium assembly"/>
    <property type="evidence" value="ECO:0007669"/>
    <property type="project" value="TreeGrafter"/>
</dbReference>
<dbReference type="GO" id="GO:0007283">
    <property type="term" value="P:spermatogenesis"/>
    <property type="evidence" value="ECO:0007669"/>
    <property type="project" value="UniProtKB-KW"/>
</dbReference>
<dbReference type="InterPro" id="IPR026099">
    <property type="entry name" value="Odf2-rel"/>
</dbReference>
<dbReference type="PANTHER" id="PTHR23162">
    <property type="entry name" value="OUTER DENSE FIBER OF SPERM TAILS 2"/>
    <property type="match status" value="1"/>
</dbReference>
<dbReference type="PANTHER" id="PTHR23162:SF8">
    <property type="entry name" value="OUTER DENSE FIBER PROTEIN 2"/>
    <property type="match status" value="1"/>
</dbReference>
<organism>
    <name type="scientific">Macaca fascicularis</name>
    <name type="common">Crab-eating macaque</name>
    <name type="synonym">Cynomolgus monkey</name>
    <dbReference type="NCBI Taxonomy" id="9541"/>
    <lineage>
        <taxon>Eukaryota</taxon>
        <taxon>Metazoa</taxon>
        <taxon>Chordata</taxon>
        <taxon>Craniata</taxon>
        <taxon>Vertebrata</taxon>
        <taxon>Euteleostomi</taxon>
        <taxon>Mammalia</taxon>
        <taxon>Eutheria</taxon>
        <taxon>Euarchontoglires</taxon>
        <taxon>Primates</taxon>
        <taxon>Haplorrhini</taxon>
        <taxon>Catarrhini</taxon>
        <taxon>Cercopithecidae</taxon>
        <taxon>Cercopithecinae</taxon>
        <taxon>Macaca</taxon>
    </lineage>
</organism>
<proteinExistence type="evidence at transcript level"/>
<gene>
    <name type="primary">ODF2</name>
    <name type="ORF">QtsA-12846</name>
    <name type="ORF">QtsA-13326</name>
</gene>